<dbReference type="EC" id="2.4.1.1"/>
<dbReference type="EMBL" id="AE005674">
    <property type="protein sequence ID" value="AAN44911.1"/>
    <property type="molecule type" value="Genomic_DNA"/>
</dbReference>
<dbReference type="EMBL" id="AE014073">
    <property type="protein sequence ID" value="AAP19270.1"/>
    <property type="molecule type" value="Genomic_DNA"/>
</dbReference>
<dbReference type="RefSeq" id="NP_709204.1">
    <property type="nucleotide sequence ID" value="NC_004337.2"/>
</dbReference>
<dbReference type="RefSeq" id="WP_000993449.1">
    <property type="nucleotide sequence ID" value="NZ_WPGW01000010.1"/>
</dbReference>
<dbReference type="SMR" id="P0AC87"/>
<dbReference type="STRING" id="198214.SF3451"/>
<dbReference type="PaxDb" id="198214-SF3451"/>
<dbReference type="GeneID" id="1026471"/>
<dbReference type="GeneID" id="93778561"/>
<dbReference type="KEGG" id="sfl:SF3451"/>
<dbReference type="KEGG" id="sfx:S4312"/>
<dbReference type="PATRIC" id="fig|198214.7.peg.4071"/>
<dbReference type="HOGENOM" id="CLU_010198_1_1_6"/>
<dbReference type="Proteomes" id="UP000001006">
    <property type="component" value="Chromosome"/>
</dbReference>
<dbReference type="Proteomes" id="UP000002673">
    <property type="component" value="Chromosome"/>
</dbReference>
<dbReference type="GO" id="GO:0005737">
    <property type="term" value="C:cytoplasm"/>
    <property type="evidence" value="ECO:0007669"/>
    <property type="project" value="TreeGrafter"/>
</dbReference>
<dbReference type="GO" id="GO:0008184">
    <property type="term" value="F:glycogen phosphorylase activity"/>
    <property type="evidence" value="ECO:0007669"/>
    <property type="project" value="InterPro"/>
</dbReference>
<dbReference type="GO" id="GO:0030170">
    <property type="term" value="F:pyridoxal phosphate binding"/>
    <property type="evidence" value="ECO:0007669"/>
    <property type="project" value="InterPro"/>
</dbReference>
<dbReference type="GO" id="GO:0005980">
    <property type="term" value="P:glycogen catabolic process"/>
    <property type="evidence" value="ECO:0007669"/>
    <property type="project" value="TreeGrafter"/>
</dbReference>
<dbReference type="CDD" id="cd04300">
    <property type="entry name" value="GT35_Glycogen_Phosphorylase"/>
    <property type="match status" value="1"/>
</dbReference>
<dbReference type="FunFam" id="3.40.50.2000:FF:000003">
    <property type="entry name" value="Alpha-1,4 glucan phosphorylase"/>
    <property type="match status" value="1"/>
</dbReference>
<dbReference type="FunFam" id="3.40.50.2000:FF:000034">
    <property type="entry name" value="Alpha-1,4 glucan phosphorylase"/>
    <property type="match status" value="1"/>
</dbReference>
<dbReference type="Gene3D" id="3.40.50.2000">
    <property type="entry name" value="Glycogen Phosphorylase B"/>
    <property type="match status" value="2"/>
</dbReference>
<dbReference type="InterPro" id="IPR011833">
    <property type="entry name" value="Glycg_phsphrylas"/>
</dbReference>
<dbReference type="InterPro" id="IPR000811">
    <property type="entry name" value="Glyco_trans_35"/>
</dbReference>
<dbReference type="InterPro" id="IPR035090">
    <property type="entry name" value="Pyridoxal_P_attach_site"/>
</dbReference>
<dbReference type="NCBIfam" id="TIGR02093">
    <property type="entry name" value="P_ylase"/>
    <property type="match status" value="1"/>
</dbReference>
<dbReference type="NCBIfam" id="NF011562">
    <property type="entry name" value="PRK14986.1"/>
    <property type="match status" value="1"/>
</dbReference>
<dbReference type="PANTHER" id="PTHR11468">
    <property type="entry name" value="GLYCOGEN PHOSPHORYLASE"/>
    <property type="match status" value="1"/>
</dbReference>
<dbReference type="PANTHER" id="PTHR11468:SF3">
    <property type="entry name" value="GLYCOGEN PHOSPHORYLASE, LIVER FORM"/>
    <property type="match status" value="1"/>
</dbReference>
<dbReference type="Pfam" id="PF00343">
    <property type="entry name" value="Phosphorylase"/>
    <property type="match status" value="1"/>
</dbReference>
<dbReference type="PIRSF" id="PIRSF000460">
    <property type="entry name" value="Pprylas_GlgP"/>
    <property type="match status" value="1"/>
</dbReference>
<dbReference type="SUPFAM" id="SSF53756">
    <property type="entry name" value="UDP-Glycosyltransferase/glycogen phosphorylase"/>
    <property type="match status" value="1"/>
</dbReference>
<dbReference type="PROSITE" id="PS00102">
    <property type="entry name" value="PHOSPHORYLASE"/>
    <property type="match status" value="1"/>
</dbReference>
<gene>
    <name type="primary">glgP</name>
    <name type="ordered locus">SF3451</name>
    <name type="ordered locus">S4312</name>
</gene>
<feature type="chain" id="PRO_0000188558" description="Glycogen phosphorylase">
    <location>
        <begin position="1"/>
        <end position="815"/>
    </location>
</feature>
<feature type="modified residue" description="N6-(pyridoxal phosphate)lysine" evidence="1">
    <location>
        <position position="662"/>
    </location>
</feature>
<comment type="function">
    <text evidence="1">Phosphorylase is an important allosteric enzyme in carbohydrate metabolism. Enzymes from different sources differ in their regulatory mechanisms and in their natural substrates. However, all known phosphorylases share catalytic and structural properties (By similarity).</text>
</comment>
<comment type="catalytic activity">
    <reaction>
        <text>[(1-&gt;4)-alpha-D-glucosyl](n) + phosphate = [(1-&gt;4)-alpha-D-glucosyl](n-1) + alpha-D-glucose 1-phosphate</text>
        <dbReference type="Rhea" id="RHEA:41732"/>
        <dbReference type="Rhea" id="RHEA-COMP:9584"/>
        <dbReference type="Rhea" id="RHEA-COMP:9586"/>
        <dbReference type="ChEBI" id="CHEBI:15444"/>
        <dbReference type="ChEBI" id="CHEBI:43474"/>
        <dbReference type="ChEBI" id="CHEBI:58601"/>
        <dbReference type="EC" id="2.4.1.1"/>
    </reaction>
</comment>
<comment type="cofactor">
    <cofactor evidence="1">
        <name>pyridoxal 5'-phosphate</name>
        <dbReference type="ChEBI" id="CHEBI:597326"/>
    </cofactor>
</comment>
<comment type="similarity">
    <text evidence="2">Belongs to the glycogen phosphorylase family.</text>
</comment>
<reference key="1">
    <citation type="journal article" date="2002" name="Nucleic Acids Res.">
        <title>Genome sequence of Shigella flexneri 2a: insights into pathogenicity through comparison with genomes of Escherichia coli K12 and O157.</title>
        <authorList>
            <person name="Jin Q."/>
            <person name="Yuan Z."/>
            <person name="Xu J."/>
            <person name="Wang Y."/>
            <person name="Shen Y."/>
            <person name="Lu W."/>
            <person name="Wang J."/>
            <person name="Liu H."/>
            <person name="Yang J."/>
            <person name="Yang F."/>
            <person name="Zhang X."/>
            <person name="Zhang J."/>
            <person name="Yang G."/>
            <person name="Wu H."/>
            <person name="Qu D."/>
            <person name="Dong J."/>
            <person name="Sun L."/>
            <person name="Xue Y."/>
            <person name="Zhao A."/>
            <person name="Gao Y."/>
            <person name="Zhu J."/>
            <person name="Kan B."/>
            <person name="Ding K."/>
            <person name="Chen S."/>
            <person name="Cheng H."/>
            <person name="Yao Z."/>
            <person name="He B."/>
            <person name="Chen R."/>
            <person name="Ma D."/>
            <person name="Qiang B."/>
            <person name="Wen Y."/>
            <person name="Hou Y."/>
            <person name="Yu J."/>
        </authorList>
    </citation>
    <scope>NUCLEOTIDE SEQUENCE [LARGE SCALE GENOMIC DNA]</scope>
    <source>
        <strain>301 / Serotype 2a</strain>
    </source>
</reference>
<reference key="2">
    <citation type="journal article" date="2003" name="Infect. Immun.">
        <title>Complete genome sequence and comparative genomics of Shigella flexneri serotype 2a strain 2457T.</title>
        <authorList>
            <person name="Wei J."/>
            <person name="Goldberg M.B."/>
            <person name="Burland V."/>
            <person name="Venkatesan M.M."/>
            <person name="Deng W."/>
            <person name="Fournier G."/>
            <person name="Mayhew G.F."/>
            <person name="Plunkett G. III"/>
            <person name="Rose D.J."/>
            <person name="Darling A."/>
            <person name="Mau B."/>
            <person name="Perna N.T."/>
            <person name="Payne S.M."/>
            <person name="Runyen-Janecky L.J."/>
            <person name="Zhou S."/>
            <person name="Schwartz D.C."/>
            <person name="Blattner F.R."/>
        </authorList>
    </citation>
    <scope>NUCLEOTIDE SEQUENCE [LARGE SCALE GENOMIC DNA]</scope>
    <source>
        <strain>ATCC 700930 / 2457T / Serotype 2a</strain>
    </source>
</reference>
<accession>P0AC87</accession>
<accession>P13031</accession>
<sequence>MNAPFTYSSPTLSVEALKHSIAYKLMFTIGKDPVVANKHEWLNATLFAVRDRLVERWLRSNRAQLSQETRQVYYLSMEFLIGRTLSNAMLSLGIYEDVQGALEAMGLNLEELIDEENDPGLGNGGLGRLAACFLDSLATLGLPGRGYGIRYDYGMFKQNIVNGSQKESPDYWLEYGNPWEFKRHNTRYKVRFGGRIQQEGKKTRWIETEEILGVAYDQIIPGYDTDATNTLRLWSAQASSEINLGKFNQGDYFAAVEDKNHSENVSRVLYPDDSTYSGRELRLRQEYFLVSSTIQDILSRHYQLHKTYDNLADKIAIHLNDTHPVLSIPEMMRLLIDEHQFSWDDAFEVCCQVFSYTNHTLMSEALETWPVDMLGKILPRHLQIIFEINDYFLKTLQEQYPNDTDLLGRASIIDESNGRRVRMAWLAVVVSHKVNGVSELHSNLMVQSLFADFAKIFPGRFTNVTNGVTPRRWLAVANPSLSAVLDEHLGRNWRTDLSLLNELQQHCDFPMVNHAVHQAKLENKKRLAEYIAQQLNVVVNPKALFDVQIKRIHEYKRQLMNVLHVITRYNRIKADPDAKWVPRVNIFGGKAASAYYMAKHIIHLINDVAKVINNDPQIGDKLKVVFIPNYSVSLAQLIIPAADLSEQISLAGTEASGTSNMKFALNGALTIGTLDGANVEMLDHVGADNIFIFGNTAEEVEELRRQGYKPREYYEKDEELHQVLTQIGSGVFSPEDPGRYRDLVDSLINFGDHYQVLADYRSYVDCQDKVDELYELQEEWTAKAMLNIANMGYFSSDRTIKEYADHIWHIDPVRL</sequence>
<name>PHSG_SHIFL</name>
<proteinExistence type="inferred from homology"/>
<organism>
    <name type="scientific">Shigella flexneri</name>
    <dbReference type="NCBI Taxonomy" id="623"/>
    <lineage>
        <taxon>Bacteria</taxon>
        <taxon>Pseudomonadati</taxon>
        <taxon>Pseudomonadota</taxon>
        <taxon>Gammaproteobacteria</taxon>
        <taxon>Enterobacterales</taxon>
        <taxon>Enterobacteriaceae</taxon>
        <taxon>Shigella</taxon>
    </lineage>
</organism>
<evidence type="ECO:0000250" key="1"/>
<evidence type="ECO:0000305" key="2"/>
<protein>
    <recommendedName>
        <fullName>Glycogen phosphorylase</fullName>
        <ecNumber>2.4.1.1</ecNumber>
    </recommendedName>
</protein>
<keyword id="KW-0021">Allosteric enzyme</keyword>
<keyword id="KW-0119">Carbohydrate metabolism</keyword>
<keyword id="KW-0321">Glycogen metabolism</keyword>
<keyword id="KW-0328">Glycosyltransferase</keyword>
<keyword id="KW-0663">Pyridoxal phosphate</keyword>
<keyword id="KW-1185">Reference proteome</keyword>
<keyword id="KW-0808">Transferase</keyword>